<accession>Q9UT19</accession>
<accession>P78818</accession>
<evidence type="ECO:0000250" key="1"/>
<evidence type="ECO:0000250" key="2">
    <source>
        <dbReference type="UniProtKB" id="O50008"/>
    </source>
</evidence>
<evidence type="ECO:0000250" key="3">
    <source>
        <dbReference type="UniProtKB" id="P82610"/>
    </source>
</evidence>
<evidence type="ECO:0000269" key="4">
    <source>
    </source>
</evidence>
<evidence type="ECO:0000269" key="5">
    <source>
    </source>
</evidence>
<evidence type="ECO:0000269" key="6">
    <source>
    </source>
</evidence>
<evidence type="ECO:0000305" key="7"/>
<evidence type="ECO:0000305" key="8">
    <source>
    </source>
</evidence>
<comment type="function">
    <text evidence="8">Catalyzes the transfer of a methyl group from 5-methyltetrahydrofolate to homocysteine resulting in methionine formation.</text>
</comment>
<comment type="catalytic activity">
    <reaction evidence="8">
        <text>5-methyltetrahydropteroyltri-L-glutamate + L-homocysteine = tetrahydropteroyltri-L-glutamate + L-methionine</text>
        <dbReference type="Rhea" id="RHEA:21196"/>
        <dbReference type="ChEBI" id="CHEBI:57844"/>
        <dbReference type="ChEBI" id="CHEBI:58140"/>
        <dbReference type="ChEBI" id="CHEBI:58199"/>
        <dbReference type="ChEBI" id="CHEBI:58207"/>
        <dbReference type="EC" id="2.1.1.14"/>
    </reaction>
    <physiologicalReaction direction="left-to-right" evidence="8">
        <dbReference type="Rhea" id="RHEA:21197"/>
    </physiologicalReaction>
</comment>
<comment type="cofactor">
    <cofactor evidence="1">
        <name>Zn(2+)</name>
        <dbReference type="ChEBI" id="CHEBI:29105"/>
    </cofactor>
</comment>
<comment type="pathway">
    <text evidence="8">Amino-acid biosynthesis; L-methionine biosynthesis via de novo pathway; L-methionine from L-homocysteine (MetE route): step 1/1.</text>
</comment>
<comment type="subcellular location">
    <subcellularLocation>
        <location evidence="5">Nucleus</location>
    </subcellularLocation>
    <subcellularLocation>
        <location evidence="5">Cytoplasm</location>
    </subcellularLocation>
</comment>
<comment type="disruption phenotype">
    <text evidence="4">Leads to methionine and adenine auxotrophy.</text>
</comment>
<comment type="similarity">
    <text evidence="7">Belongs to the vitamin-B12 independent methionine synthase family.</text>
</comment>
<comment type="sequence caution" evidence="7">
    <conflict type="frameshift">
        <sequence resource="EMBL-CDS" id="BAA13829"/>
    </conflict>
</comment>
<sequence length="764" mass="85340">MVKSAVLGFPRIGKNRELKKATEAYWSGKTSAEELLATAKQLRLEHWKLQKAQGVDIIPSNDFSLYDQIMDHSFSFNVIPPRYRLSGLSSLDTYFAMGRGMQRAATADKAAVDVPAGEMVKWFDSNYHFLRPEVSEETDFKLSSTKALDEFLEAKEAGIITRPVLVGPVTYLFIAKAAKGSSIKPIELLPKLLPVYVELIKKLTEAGAEYIQIDEPILTLDLPQEILASYKEAYETLGKIGKLILTTYFGSLQSNADVLKGLPIAGVHVDVVRAPENLDRALAVLGENQIISVGVVSGRNIWKTDFQKATAIIEKAISAVGSERVQVASSSSILHIPHSLSGEDQINPEIKRWFAFAVEKCAELAILTKAANDGPASVRAELEANAADCKARAESPITNVEAVRERQSKVTPQMHERKSPFETRYAKQQASLKLPLFPTTTIGSFPQTKEIRVTRNRFAKGLISQEEYDAFIRKEISDVVKFQEEVGLDVLVHGEPERNDMVQYFGERMEGFVFTVNGWVQSYGSRCVRPPIIVGDVYRPAPMTVKESQYAQSITSKPMKGMLTAPITILRWSFPRDDVHDSVQAQQIALGLRDEVLDLEKAGIKVIQCDEPALREGLPLRRAEWDEYLKWAIDAFRLATAAVQDDTQIHSHFCYSDFNDIFDAIQRLDADVVSIENSKSDMKLLNVLSRYTSCIGPGLFDIHSPRVPPVSEFKERIDAIVKHVPKDHLWLNPDCGLKTRGWPETTADLKNMIAAAREAREQYA</sequence>
<proteinExistence type="evidence at protein level"/>
<organism>
    <name type="scientific">Schizosaccharomyces pombe (strain 972 / ATCC 24843)</name>
    <name type="common">Fission yeast</name>
    <dbReference type="NCBI Taxonomy" id="284812"/>
    <lineage>
        <taxon>Eukaryota</taxon>
        <taxon>Fungi</taxon>
        <taxon>Dikarya</taxon>
        <taxon>Ascomycota</taxon>
        <taxon>Taphrinomycotina</taxon>
        <taxon>Schizosaccharomycetes</taxon>
        <taxon>Schizosaccharomycetales</taxon>
        <taxon>Schizosaccharomycetaceae</taxon>
        <taxon>Schizosaccharomyces</taxon>
    </lineage>
</organism>
<feature type="initiator methionine" description="Removed" evidence="1">
    <location>
        <position position="1"/>
    </location>
</feature>
<feature type="chain" id="PRO_0000098703" description="Probable 5-methyltetrahydropteroyltriglutamate--homocysteine methyltransferase">
    <location>
        <begin position="2"/>
        <end position="764"/>
    </location>
</feature>
<feature type="active site" description="Proton donor" evidence="3">
    <location>
        <position position="703"/>
    </location>
</feature>
<feature type="binding site" evidence="3">
    <location>
        <position position="19"/>
    </location>
    <ligand>
        <name>5-methyltetrahydropteroyltri-L-glutamate</name>
        <dbReference type="ChEBI" id="CHEBI:58207"/>
    </ligand>
</feature>
<feature type="binding site" evidence="3">
    <location>
        <position position="126"/>
    </location>
    <ligand>
        <name>5-methyltetrahydropteroyltri-L-glutamate</name>
        <dbReference type="ChEBI" id="CHEBI:58207"/>
    </ligand>
</feature>
<feature type="binding site" evidence="3">
    <location>
        <begin position="442"/>
        <end position="444"/>
    </location>
    <ligand>
        <name>L-homocysteine</name>
        <dbReference type="ChEBI" id="CHEBI:58199"/>
    </ligand>
</feature>
<feature type="binding site" evidence="3">
    <location>
        <begin position="442"/>
        <end position="444"/>
    </location>
    <ligand>
        <name>L-methionine</name>
        <dbReference type="ChEBI" id="CHEBI:57844"/>
    </ligand>
</feature>
<feature type="binding site" evidence="3">
    <location>
        <position position="495"/>
    </location>
    <ligand>
        <name>L-homocysteine</name>
        <dbReference type="ChEBI" id="CHEBI:58199"/>
    </ligand>
</feature>
<feature type="binding site" evidence="3">
    <location>
        <position position="495"/>
    </location>
    <ligand>
        <name>L-methionine</name>
        <dbReference type="ChEBI" id="CHEBI:57844"/>
    </ligand>
</feature>
<feature type="binding site" evidence="3">
    <location>
        <position position="500"/>
    </location>
    <ligand>
        <name>5-methyltetrahydropteroyltri-L-glutamate</name>
        <dbReference type="ChEBI" id="CHEBI:58207"/>
    </ligand>
</feature>
<feature type="binding site" evidence="3">
    <location>
        <position position="523"/>
    </location>
    <ligand>
        <name>5-methyltetrahydropteroyltri-L-glutamate</name>
        <dbReference type="ChEBI" id="CHEBI:58207"/>
    </ligand>
</feature>
<feature type="binding site" evidence="2">
    <location>
        <begin position="526"/>
        <end position="527"/>
    </location>
    <ligand>
        <name>5-methyltetrahydropteroyltri-L-glutamate</name>
        <dbReference type="ChEBI" id="CHEBI:58207"/>
    </ligand>
</feature>
<feature type="binding site" evidence="3">
    <location>
        <position position="572"/>
    </location>
    <ligand>
        <name>5-methyltetrahydropteroyltri-L-glutamate</name>
        <dbReference type="ChEBI" id="CHEBI:58207"/>
    </ligand>
</feature>
<feature type="binding site" evidence="3">
    <location>
        <position position="610"/>
    </location>
    <ligand>
        <name>L-homocysteine</name>
        <dbReference type="ChEBI" id="CHEBI:58199"/>
    </ligand>
</feature>
<feature type="binding site" evidence="3">
    <location>
        <position position="610"/>
    </location>
    <ligand>
        <name>L-methionine</name>
        <dbReference type="ChEBI" id="CHEBI:57844"/>
    </ligand>
</feature>
<feature type="binding site" evidence="2">
    <location>
        <position position="652"/>
    </location>
    <ligand>
        <name>Zn(2+)</name>
        <dbReference type="ChEBI" id="CHEBI:29105"/>
        <note>catalytic</note>
    </ligand>
</feature>
<feature type="binding site" evidence="2">
    <location>
        <position position="654"/>
    </location>
    <ligand>
        <name>Zn(2+)</name>
        <dbReference type="ChEBI" id="CHEBI:29105"/>
        <note>catalytic</note>
    </ligand>
</feature>
<feature type="binding site" evidence="3">
    <location>
        <position position="676"/>
    </location>
    <ligand>
        <name>Zn(2+)</name>
        <dbReference type="ChEBI" id="CHEBI:29105"/>
        <note>catalytic</note>
    </ligand>
</feature>
<feature type="binding site" evidence="2">
    <location>
        <position position="735"/>
    </location>
    <ligand>
        <name>Zn(2+)</name>
        <dbReference type="ChEBI" id="CHEBI:29105"/>
        <note>catalytic</note>
    </ligand>
</feature>
<feature type="modified residue" description="Phosphoserine" evidence="6">
    <location>
        <position position="182"/>
    </location>
</feature>
<feature type="modified residue" description="Phosphothreonine" evidence="6">
    <location>
        <position position="441"/>
    </location>
</feature>
<feature type="sequence conflict" description="In Ref. 2; BAA13829." evidence="7" ref="2">
    <original>E</original>
    <variation>G</variation>
    <location>
        <position position="416"/>
    </location>
</feature>
<reference key="1">
    <citation type="journal article" date="2002" name="Nature">
        <title>The genome sequence of Schizosaccharomyces pombe.</title>
        <authorList>
            <person name="Wood V."/>
            <person name="Gwilliam R."/>
            <person name="Rajandream M.A."/>
            <person name="Lyne M.H."/>
            <person name="Lyne R."/>
            <person name="Stewart A."/>
            <person name="Sgouros J.G."/>
            <person name="Peat N."/>
            <person name="Hayles J."/>
            <person name="Baker S.G."/>
            <person name="Basham D."/>
            <person name="Bowman S."/>
            <person name="Brooks K."/>
            <person name="Brown D."/>
            <person name="Brown S."/>
            <person name="Chillingworth T."/>
            <person name="Churcher C.M."/>
            <person name="Collins M."/>
            <person name="Connor R."/>
            <person name="Cronin A."/>
            <person name="Davis P."/>
            <person name="Feltwell T."/>
            <person name="Fraser A."/>
            <person name="Gentles S."/>
            <person name="Goble A."/>
            <person name="Hamlin N."/>
            <person name="Harris D.E."/>
            <person name="Hidalgo J."/>
            <person name="Hodgson G."/>
            <person name="Holroyd S."/>
            <person name="Hornsby T."/>
            <person name="Howarth S."/>
            <person name="Huckle E.J."/>
            <person name="Hunt S."/>
            <person name="Jagels K."/>
            <person name="James K.D."/>
            <person name="Jones L."/>
            <person name="Jones M."/>
            <person name="Leather S."/>
            <person name="McDonald S."/>
            <person name="McLean J."/>
            <person name="Mooney P."/>
            <person name="Moule S."/>
            <person name="Mungall K.L."/>
            <person name="Murphy L.D."/>
            <person name="Niblett D."/>
            <person name="Odell C."/>
            <person name="Oliver K."/>
            <person name="O'Neil S."/>
            <person name="Pearson D."/>
            <person name="Quail M.A."/>
            <person name="Rabbinowitsch E."/>
            <person name="Rutherford K.M."/>
            <person name="Rutter S."/>
            <person name="Saunders D."/>
            <person name="Seeger K."/>
            <person name="Sharp S."/>
            <person name="Skelton J."/>
            <person name="Simmonds M.N."/>
            <person name="Squares R."/>
            <person name="Squares S."/>
            <person name="Stevens K."/>
            <person name="Taylor K."/>
            <person name="Taylor R.G."/>
            <person name="Tivey A."/>
            <person name="Walsh S.V."/>
            <person name="Warren T."/>
            <person name="Whitehead S."/>
            <person name="Woodward J.R."/>
            <person name="Volckaert G."/>
            <person name="Aert R."/>
            <person name="Robben J."/>
            <person name="Grymonprez B."/>
            <person name="Weltjens I."/>
            <person name="Vanstreels E."/>
            <person name="Rieger M."/>
            <person name="Schaefer M."/>
            <person name="Mueller-Auer S."/>
            <person name="Gabel C."/>
            <person name="Fuchs M."/>
            <person name="Duesterhoeft A."/>
            <person name="Fritzc C."/>
            <person name="Holzer E."/>
            <person name="Moestl D."/>
            <person name="Hilbert H."/>
            <person name="Borzym K."/>
            <person name="Langer I."/>
            <person name="Beck A."/>
            <person name="Lehrach H."/>
            <person name="Reinhardt R."/>
            <person name="Pohl T.M."/>
            <person name="Eger P."/>
            <person name="Zimmermann W."/>
            <person name="Wedler H."/>
            <person name="Wambutt R."/>
            <person name="Purnelle B."/>
            <person name="Goffeau A."/>
            <person name="Cadieu E."/>
            <person name="Dreano S."/>
            <person name="Gloux S."/>
            <person name="Lelaure V."/>
            <person name="Mottier S."/>
            <person name="Galibert F."/>
            <person name="Aves S.J."/>
            <person name="Xiang Z."/>
            <person name="Hunt C."/>
            <person name="Moore K."/>
            <person name="Hurst S.M."/>
            <person name="Lucas M."/>
            <person name="Rochet M."/>
            <person name="Gaillardin C."/>
            <person name="Tallada V.A."/>
            <person name="Garzon A."/>
            <person name="Thode G."/>
            <person name="Daga R.R."/>
            <person name="Cruzado L."/>
            <person name="Jimenez J."/>
            <person name="Sanchez M."/>
            <person name="del Rey F."/>
            <person name="Benito J."/>
            <person name="Dominguez A."/>
            <person name="Revuelta J.L."/>
            <person name="Moreno S."/>
            <person name="Armstrong J."/>
            <person name="Forsburg S.L."/>
            <person name="Cerutti L."/>
            <person name="Lowe T."/>
            <person name="McCombie W.R."/>
            <person name="Paulsen I."/>
            <person name="Potashkin J."/>
            <person name="Shpakovski G.V."/>
            <person name="Ussery D."/>
            <person name="Barrell B.G."/>
            <person name="Nurse P."/>
        </authorList>
    </citation>
    <scope>NUCLEOTIDE SEQUENCE [LARGE SCALE GENOMIC DNA]</scope>
    <source>
        <strain>972 / ATCC 24843</strain>
    </source>
</reference>
<reference key="2">
    <citation type="journal article" date="1997" name="DNA Res.">
        <title>Identification of open reading frames in Schizosaccharomyces pombe cDNAs.</title>
        <authorList>
            <person name="Yoshioka S."/>
            <person name="Kato K."/>
            <person name="Nakai K."/>
            <person name="Okayama H."/>
            <person name="Nojima H."/>
        </authorList>
    </citation>
    <scope>NUCLEOTIDE SEQUENCE [LARGE SCALE MRNA] OF 290-764</scope>
    <source>
        <strain>PR745</strain>
    </source>
</reference>
<reference key="3">
    <citation type="journal article" date="2006" name="Microbiology">
        <title>Homocysteine accumulation causes a defect in purine biosynthesis: further characterization of Schizosaccharomyces pombe methionine auxotrophs.</title>
        <authorList>
            <person name="Fujita Y."/>
            <person name="Ukena E."/>
            <person name="Iefuji H."/>
            <person name="Giga-Hama Y."/>
            <person name="Takegawa K."/>
        </authorList>
    </citation>
    <scope>DISRUPTION PHENOTYPE</scope>
    <scope>FUNCTION</scope>
    <scope>CATALYTIC ACTIVITY</scope>
</reference>
<reference key="4">
    <citation type="journal article" date="2006" name="Nat. Biotechnol.">
        <title>ORFeome cloning and global analysis of protein localization in the fission yeast Schizosaccharomyces pombe.</title>
        <authorList>
            <person name="Matsuyama A."/>
            <person name="Arai R."/>
            <person name="Yashiroda Y."/>
            <person name="Shirai A."/>
            <person name="Kamata A."/>
            <person name="Sekido S."/>
            <person name="Kobayashi Y."/>
            <person name="Hashimoto A."/>
            <person name="Hamamoto M."/>
            <person name="Hiraoka Y."/>
            <person name="Horinouchi S."/>
            <person name="Yoshida M."/>
        </authorList>
    </citation>
    <scope>SUBCELLULAR LOCATION [LARGE SCALE ANALYSIS]</scope>
</reference>
<reference key="5">
    <citation type="journal article" date="2008" name="J. Proteome Res.">
        <title>Phosphoproteome analysis of fission yeast.</title>
        <authorList>
            <person name="Wilson-Grady J.T."/>
            <person name="Villen J."/>
            <person name="Gygi S.P."/>
        </authorList>
    </citation>
    <scope>PHOSPHORYLATION [LARGE SCALE ANALYSIS] AT SER-182 AND THR-441</scope>
    <scope>IDENTIFICATION BY MASS SPECTROMETRY</scope>
</reference>
<keyword id="KW-0028">Amino-acid biosynthesis</keyword>
<keyword id="KW-0963">Cytoplasm</keyword>
<keyword id="KW-0479">Metal-binding</keyword>
<keyword id="KW-0486">Methionine biosynthesis</keyword>
<keyword id="KW-0489">Methyltransferase</keyword>
<keyword id="KW-0539">Nucleus</keyword>
<keyword id="KW-0597">Phosphoprotein</keyword>
<keyword id="KW-1185">Reference proteome</keyword>
<keyword id="KW-0808">Transferase</keyword>
<keyword id="KW-0862">Zinc</keyword>
<name>METE_SCHPO</name>
<protein>
    <recommendedName>
        <fullName>Probable 5-methyltetrahydropteroyltriglutamate--homocysteine methyltransferase</fullName>
        <ecNumber evidence="8">2.1.1.14</ecNumber>
    </recommendedName>
    <alternativeName>
        <fullName>Cobalamin-independent methionine synthase</fullName>
    </alternativeName>
    <alternativeName>
        <fullName>Methionine synthase, vitamin-B12 independent isozyme</fullName>
    </alternativeName>
</protein>
<gene>
    <name type="primary">met26</name>
    <name type="ORF">SPAC9.09</name>
</gene>
<dbReference type="EC" id="2.1.1.14" evidence="8"/>
<dbReference type="EMBL" id="CU329670">
    <property type="protein sequence ID" value="CAB57427.1"/>
    <property type="molecule type" value="Genomic_DNA"/>
</dbReference>
<dbReference type="EMBL" id="D89167">
    <property type="protein sequence ID" value="BAA13829.1"/>
    <property type="status" value="ALT_FRAME"/>
    <property type="molecule type" value="mRNA"/>
</dbReference>
<dbReference type="PIR" id="T39194">
    <property type="entry name" value="T39194"/>
</dbReference>
<dbReference type="PIR" id="T42529">
    <property type="entry name" value="T42529"/>
</dbReference>
<dbReference type="RefSeq" id="NP_593352.1">
    <property type="nucleotide sequence ID" value="NM_001018784.2"/>
</dbReference>
<dbReference type="SMR" id="Q9UT19"/>
<dbReference type="BioGRID" id="280000">
    <property type="interactions" value="7"/>
</dbReference>
<dbReference type="FunCoup" id="Q9UT19">
    <property type="interactions" value="194"/>
</dbReference>
<dbReference type="STRING" id="284812.Q9UT19"/>
<dbReference type="iPTMnet" id="Q9UT19"/>
<dbReference type="PaxDb" id="4896-SPAC9.09.1"/>
<dbReference type="EnsemblFungi" id="SPAC9.09.1">
    <property type="protein sequence ID" value="SPAC9.09.1:pep"/>
    <property type="gene ID" value="SPAC9.09"/>
</dbReference>
<dbReference type="GeneID" id="2543585"/>
<dbReference type="KEGG" id="spo:2543585"/>
<dbReference type="PomBase" id="SPAC9.09">
    <property type="gene designation" value="met26"/>
</dbReference>
<dbReference type="VEuPathDB" id="FungiDB:SPAC9.09"/>
<dbReference type="eggNOG" id="KOG2263">
    <property type="taxonomic scope" value="Eukaryota"/>
</dbReference>
<dbReference type="HOGENOM" id="CLU_013175_0_0_1"/>
<dbReference type="InParanoid" id="Q9UT19"/>
<dbReference type="OMA" id="KVMKGML"/>
<dbReference type="PhylomeDB" id="Q9UT19"/>
<dbReference type="UniPathway" id="UPA00051">
    <property type="reaction ID" value="UER00082"/>
</dbReference>
<dbReference type="PRO" id="PR:Q9UT19"/>
<dbReference type="Proteomes" id="UP000002485">
    <property type="component" value="Chromosome I"/>
</dbReference>
<dbReference type="GO" id="GO:0005829">
    <property type="term" value="C:cytosol"/>
    <property type="evidence" value="ECO:0007005"/>
    <property type="project" value="PomBase"/>
</dbReference>
<dbReference type="GO" id="GO:0005634">
    <property type="term" value="C:nucleus"/>
    <property type="evidence" value="ECO:0007005"/>
    <property type="project" value="PomBase"/>
</dbReference>
<dbReference type="GO" id="GO:0003871">
    <property type="term" value="F:5-methyltetrahydropteroyltriglutamate-homocysteine S-methyltransferase activity"/>
    <property type="evidence" value="ECO:0000315"/>
    <property type="project" value="PomBase"/>
</dbReference>
<dbReference type="GO" id="GO:0008270">
    <property type="term" value="F:zinc ion binding"/>
    <property type="evidence" value="ECO:0007669"/>
    <property type="project" value="InterPro"/>
</dbReference>
<dbReference type="GO" id="GO:0019280">
    <property type="term" value="P:L-methionine biosynthetic process from L-homoserine via O-acetyl-L-homoserine"/>
    <property type="evidence" value="ECO:0000315"/>
    <property type="project" value="PomBase"/>
</dbReference>
<dbReference type="GO" id="GO:0009086">
    <property type="term" value="P:methionine biosynthetic process"/>
    <property type="evidence" value="ECO:0007669"/>
    <property type="project" value="UniProtKB-KW"/>
</dbReference>
<dbReference type="GO" id="GO:0032259">
    <property type="term" value="P:methylation"/>
    <property type="evidence" value="ECO:0007669"/>
    <property type="project" value="UniProtKB-KW"/>
</dbReference>
<dbReference type="CDD" id="cd03311">
    <property type="entry name" value="CIMS_C_terminal_like"/>
    <property type="match status" value="1"/>
</dbReference>
<dbReference type="CDD" id="cd03312">
    <property type="entry name" value="CIMS_N_terminal_like"/>
    <property type="match status" value="1"/>
</dbReference>
<dbReference type="FunFam" id="3.20.20.210:FF:000002">
    <property type="entry name" value="5-methyltetrahydropteroyltriglutamate--homocysteine methyltransferase"/>
    <property type="match status" value="1"/>
</dbReference>
<dbReference type="FunFam" id="3.20.20.210:FF:000003">
    <property type="entry name" value="5-methyltetrahydropteroyltriglutamate--homocysteine methyltransferase"/>
    <property type="match status" value="1"/>
</dbReference>
<dbReference type="Gene3D" id="3.20.20.210">
    <property type="match status" value="2"/>
</dbReference>
<dbReference type="HAMAP" id="MF_00172">
    <property type="entry name" value="Meth_synth"/>
    <property type="match status" value="1"/>
</dbReference>
<dbReference type="InterPro" id="IPR013215">
    <property type="entry name" value="Cbl-indep_Met_Synth_N"/>
</dbReference>
<dbReference type="InterPro" id="IPR006276">
    <property type="entry name" value="Cobalamin-indep_Met_synthase"/>
</dbReference>
<dbReference type="InterPro" id="IPR002629">
    <property type="entry name" value="Met_Synth_C/arc"/>
</dbReference>
<dbReference type="InterPro" id="IPR038071">
    <property type="entry name" value="UROD/MetE-like_sf"/>
</dbReference>
<dbReference type="NCBIfam" id="TIGR01371">
    <property type="entry name" value="met_syn_B12ind"/>
    <property type="match status" value="1"/>
</dbReference>
<dbReference type="NCBIfam" id="NF003556">
    <property type="entry name" value="PRK05222.1"/>
    <property type="match status" value="1"/>
</dbReference>
<dbReference type="PANTHER" id="PTHR30519">
    <property type="entry name" value="5-METHYLTETRAHYDROPTEROYLTRIGLUTAMATE--HOMOCYSTEINE METHYLTRANSFERASE"/>
    <property type="match status" value="1"/>
</dbReference>
<dbReference type="Pfam" id="PF08267">
    <property type="entry name" value="Meth_synt_1"/>
    <property type="match status" value="1"/>
</dbReference>
<dbReference type="Pfam" id="PF01717">
    <property type="entry name" value="Meth_synt_2"/>
    <property type="match status" value="1"/>
</dbReference>
<dbReference type="PIRSF" id="PIRSF000382">
    <property type="entry name" value="MeTrfase_B12_ind"/>
    <property type="match status" value="1"/>
</dbReference>
<dbReference type="SUPFAM" id="SSF51726">
    <property type="entry name" value="UROD/MetE-like"/>
    <property type="match status" value="2"/>
</dbReference>